<gene>
    <name evidence="1" type="primary">arnB</name>
    <name type="ordered locus">SSPA0530</name>
</gene>
<protein>
    <recommendedName>
        <fullName evidence="1">UDP-4-amino-4-deoxy-L-arabinose--oxoglutarate aminotransferase</fullName>
        <ecNumber evidence="1">2.6.1.87</ecNumber>
    </recommendedName>
    <alternativeName>
        <fullName evidence="1">UDP-(beta-L-threo-pentapyranosyl-4''-ulose diphosphate) aminotransferase</fullName>
        <shortName evidence="1">UDP-Ara4O aminotransferase</shortName>
    </alternativeName>
    <alternativeName>
        <fullName evidence="1">UDP-4-amino-4-deoxy-L-arabinose aminotransferase</fullName>
    </alternativeName>
</protein>
<accession>B5BCP8</accession>
<reference key="1">
    <citation type="journal article" date="2009" name="BMC Genomics">
        <title>Pseudogene accumulation in the evolutionary histories of Salmonella enterica serovars Paratyphi A and Typhi.</title>
        <authorList>
            <person name="Holt K.E."/>
            <person name="Thomson N.R."/>
            <person name="Wain J."/>
            <person name="Langridge G.C."/>
            <person name="Hasan R."/>
            <person name="Bhutta Z.A."/>
            <person name="Quail M.A."/>
            <person name="Norbertczak H."/>
            <person name="Walker D."/>
            <person name="Simmonds M."/>
            <person name="White B."/>
            <person name="Bason N."/>
            <person name="Mungall K."/>
            <person name="Dougan G."/>
            <person name="Parkhill J."/>
        </authorList>
    </citation>
    <scope>NUCLEOTIDE SEQUENCE [LARGE SCALE GENOMIC DNA]</scope>
    <source>
        <strain>AKU_12601</strain>
    </source>
</reference>
<sequence>MLDFLPFSRPAMGAEELAAVKTVLDSGWITTGPKNQELEAAFCRLTGNQYAVAVSSATAGMHIALMALGIGEGDEVITPSMTWVSTLNMIVLLGANPVMVDVDRDTLMVTPEHIEAAITPQTKAIIPVHYAGAPADLDAIYALGERYGIPVIEDAAHATGTSYKGRHIGARGTAIFSFHAIKNITCAEGGIVVTDNPQFADKLRSLKFHGLGVDAWDRQSGGRAPQAEVLAPGYKYNLPDLNAAIALAQLQKLDALNARRAAIAAQYHQAMADLPFQPLSLPSWEHIHAWHLFIIRVDEARCGITRDALMASLKTKGIGTGLHFRAAHTQKYYRERFPTLTLPDTEWNSERICSLPLFPDMTESDFDRVITALHQIAGQ</sequence>
<dbReference type="EC" id="2.6.1.87" evidence="1"/>
<dbReference type="EMBL" id="FM200053">
    <property type="protein sequence ID" value="CAR58659.1"/>
    <property type="status" value="ALT_INIT"/>
    <property type="molecule type" value="Genomic_DNA"/>
</dbReference>
<dbReference type="SMR" id="B5BCP8"/>
<dbReference type="KEGG" id="sek:SSPA0530"/>
<dbReference type="HOGENOM" id="CLU_033332_0_3_6"/>
<dbReference type="UniPathway" id="UPA00030"/>
<dbReference type="UniPathway" id="UPA00032">
    <property type="reaction ID" value="UER00493"/>
</dbReference>
<dbReference type="Proteomes" id="UP000001869">
    <property type="component" value="Chromosome"/>
</dbReference>
<dbReference type="GO" id="GO:0016020">
    <property type="term" value="C:membrane"/>
    <property type="evidence" value="ECO:0007669"/>
    <property type="project" value="GOC"/>
</dbReference>
<dbReference type="GO" id="GO:0030170">
    <property type="term" value="F:pyridoxal phosphate binding"/>
    <property type="evidence" value="ECO:0007669"/>
    <property type="project" value="TreeGrafter"/>
</dbReference>
<dbReference type="GO" id="GO:0099620">
    <property type="term" value="F:UDP-4-amino-4-deoxy-L-arabinose aminotransferase"/>
    <property type="evidence" value="ECO:0007669"/>
    <property type="project" value="UniProtKB-EC"/>
</dbReference>
<dbReference type="GO" id="GO:0009245">
    <property type="term" value="P:lipid A biosynthetic process"/>
    <property type="evidence" value="ECO:0007669"/>
    <property type="project" value="UniProtKB-KW"/>
</dbReference>
<dbReference type="GO" id="GO:0009103">
    <property type="term" value="P:lipopolysaccharide biosynthetic process"/>
    <property type="evidence" value="ECO:0007669"/>
    <property type="project" value="UniProtKB-UniRule"/>
</dbReference>
<dbReference type="GO" id="GO:0046677">
    <property type="term" value="P:response to antibiotic"/>
    <property type="evidence" value="ECO:0007669"/>
    <property type="project" value="UniProtKB-KW"/>
</dbReference>
<dbReference type="CDD" id="cd00616">
    <property type="entry name" value="AHBA_syn"/>
    <property type="match status" value="1"/>
</dbReference>
<dbReference type="FunFam" id="3.40.640.10:FF:000040">
    <property type="entry name" value="UDP-4-amino-4-deoxy-L-arabinose--oxoglutarate aminotransferase"/>
    <property type="match status" value="1"/>
</dbReference>
<dbReference type="FunFam" id="3.90.1150.10:FF:000030">
    <property type="entry name" value="UDP-4-amino-4-deoxy-L-arabinose--oxoglutarate aminotransferase"/>
    <property type="match status" value="1"/>
</dbReference>
<dbReference type="Gene3D" id="3.90.1150.10">
    <property type="entry name" value="Aspartate Aminotransferase, domain 1"/>
    <property type="match status" value="1"/>
</dbReference>
<dbReference type="Gene3D" id="3.40.640.10">
    <property type="entry name" value="Type I PLP-dependent aspartate aminotransferase-like (Major domain)"/>
    <property type="match status" value="1"/>
</dbReference>
<dbReference type="HAMAP" id="MF_01167">
    <property type="entry name" value="ArnB_transfer"/>
    <property type="match status" value="1"/>
</dbReference>
<dbReference type="InterPro" id="IPR022850">
    <property type="entry name" value="ArnB_NH2Trfase"/>
</dbReference>
<dbReference type="InterPro" id="IPR000653">
    <property type="entry name" value="DegT/StrS_aminotransferase"/>
</dbReference>
<dbReference type="InterPro" id="IPR015424">
    <property type="entry name" value="PyrdxlP-dep_Trfase"/>
</dbReference>
<dbReference type="InterPro" id="IPR015421">
    <property type="entry name" value="PyrdxlP-dep_Trfase_major"/>
</dbReference>
<dbReference type="InterPro" id="IPR015422">
    <property type="entry name" value="PyrdxlP-dep_Trfase_small"/>
</dbReference>
<dbReference type="NCBIfam" id="NF008658">
    <property type="entry name" value="PRK11658.1"/>
    <property type="match status" value="1"/>
</dbReference>
<dbReference type="PANTHER" id="PTHR30244">
    <property type="entry name" value="TRANSAMINASE"/>
    <property type="match status" value="1"/>
</dbReference>
<dbReference type="PANTHER" id="PTHR30244:SF41">
    <property type="entry name" value="UDP-4-AMINO-4-DEOXY-L-ARABINOSE--OXOGLUTARATE AMINOTRANSFERASE"/>
    <property type="match status" value="1"/>
</dbReference>
<dbReference type="Pfam" id="PF01041">
    <property type="entry name" value="DegT_DnrJ_EryC1"/>
    <property type="match status" value="1"/>
</dbReference>
<dbReference type="PIRSF" id="PIRSF000390">
    <property type="entry name" value="PLP_StrS"/>
    <property type="match status" value="1"/>
</dbReference>
<dbReference type="SUPFAM" id="SSF53383">
    <property type="entry name" value="PLP-dependent transferases"/>
    <property type="match status" value="1"/>
</dbReference>
<organism>
    <name type="scientific">Salmonella paratyphi A (strain AKU_12601)</name>
    <dbReference type="NCBI Taxonomy" id="554290"/>
    <lineage>
        <taxon>Bacteria</taxon>
        <taxon>Pseudomonadati</taxon>
        <taxon>Pseudomonadota</taxon>
        <taxon>Gammaproteobacteria</taxon>
        <taxon>Enterobacterales</taxon>
        <taxon>Enterobacteriaceae</taxon>
        <taxon>Salmonella</taxon>
    </lineage>
</organism>
<evidence type="ECO:0000255" key="1">
    <source>
        <dbReference type="HAMAP-Rule" id="MF_01167"/>
    </source>
</evidence>
<evidence type="ECO:0000305" key="2"/>
<proteinExistence type="inferred from homology"/>
<comment type="function">
    <text evidence="1">Catalyzes the conversion of UDP-4-keto-arabinose (UDP-Ara4O) to UDP-4-amino-4-deoxy-L-arabinose (UDP-L-Ara4N). The modified arabinose is attached to lipid A and is required for resistance to polymyxin and cationic antimicrobial peptides.</text>
</comment>
<comment type="catalytic activity">
    <reaction evidence="1">
        <text>UDP-4-amino-4-deoxy-beta-L-arabinose + 2-oxoglutarate = UDP-beta-L-threo-pentopyranos-4-ulose + L-glutamate</text>
        <dbReference type="Rhea" id="RHEA:24710"/>
        <dbReference type="ChEBI" id="CHEBI:16810"/>
        <dbReference type="ChEBI" id="CHEBI:29985"/>
        <dbReference type="ChEBI" id="CHEBI:58708"/>
        <dbReference type="ChEBI" id="CHEBI:58710"/>
        <dbReference type="EC" id="2.6.1.87"/>
    </reaction>
</comment>
<comment type="cofactor">
    <cofactor evidence="1">
        <name>pyridoxal 5'-phosphate</name>
        <dbReference type="ChEBI" id="CHEBI:597326"/>
    </cofactor>
</comment>
<comment type="pathway">
    <text evidence="1">Nucleotide-sugar biosynthesis; UDP-4-deoxy-4-formamido-beta-L-arabinose biosynthesis; UDP-4-deoxy-4-formamido-beta-L-arabinose from UDP-alpha-D-glucuronate: step 2/3.</text>
</comment>
<comment type="pathway">
    <text evidence="1">Bacterial outer membrane biogenesis; lipopolysaccharide biosynthesis.</text>
</comment>
<comment type="subunit">
    <text evidence="1">Homodimer.</text>
</comment>
<comment type="similarity">
    <text evidence="1">Belongs to the DegT/DnrJ/EryC1 family. ArnB subfamily.</text>
</comment>
<comment type="sequence caution" evidence="2">
    <conflict type="erroneous initiation">
        <sequence resource="EMBL-CDS" id="CAR58659"/>
    </conflict>
</comment>
<feature type="chain" id="PRO_0000380542" description="UDP-4-amino-4-deoxy-L-arabinose--oxoglutarate aminotransferase">
    <location>
        <begin position="1"/>
        <end position="379"/>
    </location>
</feature>
<feature type="modified residue" description="N6-(pyridoxal phosphate)lysine" evidence="1">
    <location>
        <position position="182"/>
    </location>
</feature>
<keyword id="KW-0032">Aminotransferase</keyword>
<keyword id="KW-0046">Antibiotic resistance</keyword>
<keyword id="KW-0441">Lipid A biosynthesis</keyword>
<keyword id="KW-0444">Lipid biosynthesis</keyword>
<keyword id="KW-0443">Lipid metabolism</keyword>
<keyword id="KW-0448">Lipopolysaccharide biosynthesis</keyword>
<keyword id="KW-0663">Pyridoxal phosphate</keyword>
<keyword id="KW-0808">Transferase</keyword>
<name>ARNB_SALPK</name>